<name>APLP_DROME</name>
<sequence length="3351" mass="372677">MARMKYNIALIGILASVLLTIAVNAENACNLGCPKSDNGLLKYIPGNYYDYSFDSILTIGASSDVPNDSDDTSLKVSGSAKIFAKGNCGYTLQLSSVKVTNTKESVEKKILNSIQKPVQFTLVSGILEPQICSDSSDLDYSLNIKRAVVSLLQSGIEAEHEVDVFGMCPTHTSTSKVGNANIITKARNLNSCSHREQINSGLVSGKVNEKAGITSSLLLQANYIKESRIVNHLIENVQLTETYKFIGNTKRNSDISAKVVTILKLKNPSGTKANSPGTGSTVRSLIFQRPETYTSKNINALKTILSDLVDSTGDYVKKETAKKFVEFIRLLRQSDSETLLELAAFPHPNKVLARKVYLDGLFRTSTAESARVILKQLSKFDEKEKLLAILSLNIVKSVDKETLNQAASQLLPNAPKELYIAVGNLVAKYCLKNYCQGPEIDAISKKFSDGLKHCKPNTKREEERIVYILKGLGNAKSLSGNTVAALSECASTGRSNRIRVAALHAFSKVKCEETLQSKSLELLKNRNEDSELRIEAYLSAISCPNAEVANQISEIVNSETVNQVGGFISSNLKAIRDSTDVSRDQQKYHLANIRVTKTFPVDYRRYSFNNEVSYKLESLGVGASTDYQIIYSQHGFLPRSSRINVTTEFFGTNYNVFEASVRQENVEDVLEYYLGPKGLVNKDFDEIVKLIEVGNNGVAAGGRARRSIVDDVSKISKKYKMYGVKNVQDLNLDVSLKLFGSELAFLSLGDNIPSSLDDIINYFSTSFEKAKQELSSFEKQFSSHHLFLDTDLAYPTSIGVPLELVAQGFAATKVDLAVSLDINAILEQNWQKAKYRLKFVPSVDINANVQIGFNAQVLSTGLRVVSSAHSATGSDITVAVISDGEGFNVDLELPREKLELINFNVDTELYVAEQDKQKAIALKGNKKNKNSQPSEICFNQLELVGLNICIKSSTSLSEVQAGNGNVAERGLSVSEKFHLSRPFNFAVYLTTERKFTFKGIHTQEAFSQKWKLDYSTPGSKVSHDTTVVYELGNKPKTFSRLSFDNSQCHFAVEGGINNDKNELVVYGQYEQDKEIKKSKIGFSKNGNEYKPLIEIQDNNGISNSINGYHADGKIVVKKNSNNIERYNFENFQVSNSNNAHVAVNGWSDVGTNSLTSELRISLDHQTFLIKENLKLENGLYEAGFFINDEHSPENIYGSSIHLTIADQSYALKTNGKAAAWSIGSDGSFNFQKLADSNSARAGSLVENVEIQYKNKQVGGIKIMSNFDVNKMDVDVEISREQKIGSIIVKYESNQRHAQDYSLEASAKINKHSIDVISKCDFNGNVYVVDNSLVTSWGTLLSAKGEIGQRYSAQDININIQGNVQISGKDKVTQWILKVIGTPDKTNSDFRISRDTSELIKLTSESQHPQDKISFAKLNLIVKNQLTAKGEFRVAKNGKGDFTASIDTLKTEPKHKLEIESKFHIQSPKYDIDASLTLDGKRKVHLKSENTIEKLKFSTKNIGEANDKIIAFEANGSLKGELRGNGEIQGTFIFNAPDGRVIDGSINRKISTNAKSGLSQGNIDAQLSDTPFGSNKKRSISLIGKLDRLNTKTKEFSANSNLVYTAFNGEKSEISYQIKQQPNGDAKNIDFSLKAYGNPLPQPFEIAFALGDYSAQHAVVSITSKYGEIFSVSANGNYNNNQALEYGLQANIEIPKSTLKSLEINSHGKVLKSLIGNENAAYNVEFFLDSKTSLGQYARVNTVWNGTANDGSYDFEAQTNNMESPLKFNGKYHRKQTGNIKDGDLTGKQTYVLNAQYGAQYVKMDASLGYGAEKVDIAYVIDSSFDSVKDIKVNIRTFKPLDDSTYVVTALFKQTDKSYGLDTTFYHSAHKKGVDIRLDLLKEKPIIISSIAELLGDRKGKVLFEILNLADLDIKINSEASYVSIDEFYIIVNWSSKKLKLDGYELEARAQSKNIKIQLKNENGIIFSGTATYALKKELNKTIIDGQGKVQYQGKALSGNFKLTRQHFDFGTDREVGFSYTFMGNLGSKNGLGTLKITNKEFNTKFSVCEEKRQCTNLIVQSIVSIDEQKLDAVEHTTLIIVDLRDFGYPYEFELKSQNTRQGLKYQYHLDSFIITGNNFKYQFTANVQPTSSTIKLALPKRQILFETTQKIPADGSLFGRYEQTASFFIDKLQKPDDVARFSAIVDVTGTERVAFNANGKLKFEHPTIRPLSISGQLNGDVNQQIASAEVIFDIFRLPEQKVVGNSELRNSRSQNGFNIAYITTVKSAGLQFQYQINSNAAVDIEAHEYNIGLELNNGEIDVKAISFLNKEKFEISLSESNKHIIYIVGDFSKQNHYAKLNTKVQILDKNPIEITSEVQPNSAKIILKRQDFIDGTAEVKLGKEFKVDVIGSGKQLFNGRVALDATNFLQTNYFINEDHLNGFWHIVESEINKDSEYISENIKERLKKSRQVTDKIVKLAKEAGPDFSKLQGKLLDYKNDIVQELEADQSIAPIIDGIRTLFKKIAGIVDDINKAISEILEKAQKSIVDIYDKLQALWKDSLLKAWEDFIITVQKLISTLKTEFIKICTQSFKDLLSALEKYGPALKNYGKAIGEIVKPINDAAQEVIKIVVNAAEGVTHEFKQYVASLPSFESIRNEFNDKVKVLKLFEKATELTNSLFDQINILPQTPETSEFLQKLHDYLIAKLKQEHIDNEKYIEELGQLLIKAVRSIWVSIRSTYPGSSDHVIDFQSWIGSLTHSFDSLAVLPSILSFRSSILNCLLNENWDVVFNKKLLYSWIFFNDFELRGHVVDGKHIFTFDGLNFAYPGNCKYILAQDSVDNNFTIIGQLTNGKLKSITLIDREGSYFEVADNLALKLNGNLVEYPQHLSGLHAWRRFYTIHLYSEYGVGIVCTSDLKVCHININGFYTSKTRGLLGNGNAEPYDDFLLIDGTLAENSAALGNDYGVGKCTAIEFDNNQFKSSKRQEMCSELFGIESTLAFNFITLDSRPYRKACDIALAKVAEKEKEATACTFALAYGSAVKQINKWVLLPPRCIKCAGPAGQHDFGDEFTVKLPNNKVDVVFVVDINVTPGVLSNLIAPAINDIRESLRSRGFSDVQVGVIVFEETKRYPALLTSDGGKINYKGNVADVKLAGIKSFCDNCVEQIITEKRILDIYNSLKEIVKGIAPQADEKAFQLALDYPFRAGAAKSIIGVRSDSLEYKNWWKFVRAQLTGSITKFDGALIHLIAPVKGLSLEGVLSEKLIGFNSRLVATVDGKDSKKRTKLQFDNDMGIDFVLNNGGWVFATQNFEKLKASDQKKMLNQITSSLADTLFKTEIVSDCRCLPIHGLHGQHKCVIKSSTFVANKKAKSA</sequence>
<organism>
    <name type="scientific">Drosophila melanogaster</name>
    <name type="common">Fruit fly</name>
    <dbReference type="NCBI Taxonomy" id="7227"/>
    <lineage>
        <taxon>Eukaryota</taxon>
        <taxon>Metazoa</taxon>
        <taxon>Ecdysozoa</taxon>
        <taxon>Arthropoda</taxon>
        <taxon>Hexapoda</taxon>
        <taxon>Insecta</taxon>
        <taxon>Pterygota</taxon>
        <taxon>Neoptera</taxon>
        <taxon>Endopterygota</taxon>
        <taxon>Diptera</taxon>
        <taxon>Brachycera</taxon>
        <taxon>Muscomorpha</taxon>
        <taxon>Ephydroidea</taxon>
        <taxon>Drosophilidae</taxon>
        <taxon>Drosophila</taxon>
        <taxon>Sophophora</taxon>
    </lineage>
</organism>
<gene>
    <name evidence="16" type="primary">apolpp</name>
    <name evidence="14" type="synonym">Rfabg</name>
    <name evidence="16" type="synonym">RfaBp</name>
    <name evidence="16" type="ORF">CG11064</name>
</gene>
<comment type="function">
    <text evidence="6 9 11">Constitutes the major component of lipophorin, which mediates transport for various types of lipids in hemolymph. Acts by forming lipoprotein particles that bind lipoproteins and lipids. Also involved in the transport of hydrophobic ligands like juvenile hormones, pheromone hydrocarbons and carotenoids. Required for morphogens wingless (wg) and hedgehog (hh) function, probably by acting as vehicles for the movement of wg and hh, explaining how covalently lipidated wg and hh can spread over long distances. May also be involved in transport and/or metabolism of heme. Involved in yolk granule formation (PubMed:33891588). May be a component of yolk incorporated into yolk granules via yl/yolkless-mediated endocytosis and the endolysosomal pathway (PubMed:33891588).</text>
</comment>
<comment type="subunit">
    <text evidence="8">Interacts with Nrx-1 (via cytoplasmic domain); the interaction supports apolpp/ApoLI protein stability.</text>
</comment>
<comment type="subcellular location">
    <subcellularLocation>
        <location>Secreted</location>
    </subcellularLocation>
    <subcellularLocation>
        <location evidence="8">Cell projection</location>
        <location evidence="8">Rhabdomere</location>
    </subcellularLocation>
    <text>Secreted into hemolymph.</text>
</comment>
<comment type="tissue specificity">
    <text evidence="8 11">During stage 12, it is highly present throughout the yolk sac. By late stage 14, it localizes in the lateral fat body cells. Starting at stage 14, it localizes to the apodemes. Component of hemolymph clots (at protein level). Expressed in the amniosera. Expressed in rhabdomere of photoreceptor cells in retina (at protein level) (PubMed:23352167).</text>
</comment>
<comment type="tissue specificity">
    <molecule>Apolipophorin-1</molecule>
    <text evidence="8">Expressed in rhabdomere of photoreceptor cells in retina (at protein level).</text>
</comment>
<comment type="tissue specificity">
    <molecule>Apolipophorin-2</molecule>
    <text evidence="8">Expressed in simper cells as well as interphotoreceptor matrix (at protein level).</text>
</comment>
<comment type="PTM">
    <text evidence="10">May be modified covalently by lipidation.</text>
</comment>
<comment type="PTM">
    <text evidence="1">Cleaved into 2 chains by furin protease. However, prevention of cleavage does not impair its function (By similarity).</text>
</comment>
<comment type="disruption phenotype">
    <text evidence="9">Embryonic lethal.</text>
</comment>
<feature type="signal peptide" evidence="11">
    <location>
        <begin position="1"/>
        <end position="25"/>
    </location>
</feature>
<feature type="chain" id="PRO_0000041526" description="Apolipophorin-2">
    <location>
        <begin position="26"/>
        <end position="706"/>
    </location>
</feature>
<feature type="chain" id="PRO_0000041527" description="Apolipophorin-1">
    <location>
        <begin position="707"/>
        <end position="3351"/>
    </location>
</feature>
<feature type="domain" description="Vitellogenin" evidence="3">
    <location>
        <begin position="43"/>
        <end position="641"/>
    </location>
</feature>
<feature type="domain" description="VWFD" evidence="4">
    <location>
        <begin position="2786"/>
        <end position="2952"/>
    </location>
</feature>
<feature type="site" description="Cleavage; by furin" evidence="1">
    <location>
        <begin position="706"/>
        <end position="707"/>
    </location>
</feature>
<feature type="glycosylation site" description="N-linked (GlcNAc...) asparagine" evidence="2">
    <location>
        <position position="67"/>
    </location>
</feature>
<feature type="glycosylation site" description="N-linked (GlcNAc...) asparagine" evidence="2">
    <location>
        <position position="644"/>
    </location>
</feature>
<feature type="glycosylation site" description="N-linked (GlcNAc...) asparagine" evidence="2">
    <location>
        <position position="1514"/>
    </location>
</feature>
<feature type="glycosylation site" description="N-linked (GlcNAc...) asparagine" evidence="2">
    <location>
        <position position="1744"/>
    </location>
</feature>
<feature type="glycosylation site" description="N-linked (GlcNAc...) asparagine" evidence="2">
    <location>
        <position position="1932"/>
    </location>
</feature>
<feature type="glycosylation site" description="N-linked (GlcNAc...) asparagine" evidence="2">
    <location>
        <position position="1979"/>
    </location>
</feature>
<feature type="glycosylation site" description="N-linked (GlcNAc...) asparagine" evidence="7">
    <location>
        <position position="2822"/>
    </location>
</feature>
<feature type="sequence variant" description="In strain: 253.30." evidence="5">
    <original>S</original>
    <variation>Y</variation>
    <location>
        <position position="1696"/>
    </location>
</feature>
<feature type="sequence conflict" description="In Ref. 1; AAC47284." evidence="15" ref="1">
    <original>F</original>
    <variation>I</variation>
    <location>
        <position position="2649"/>
    </location>
</feature>
<feature type="sequence conflict" description="In Ref. 1; AAC47284." evidence="15" ref="1">
    <original>Q</original>
    <variation>E</variation>
    <location>
        <position position="2965"/>
    </location>
</feature>
<keyword id="KW-0966">Cell projection</keyword>
<keyword id="KW-0165">Cleavage on pair of basic residues</keyword>
<keyword id="KW-0903">Direct protein sequencing</keyword>
<keyword id="KW-0325">Glycoprotein</keyword>
<keyword id="KW-0349">Heme</keyword>
<keyword id="KW-0408">Iron</keyword>
<keyword id="KW-0445">Lipid transport</keyword>
<keyword id="KW-0446">Lipid-binding</keyword>
<keyword id="KW-0449">Lipoprotein</keyword>
<keyword id="KW-0479">Metal-binding</keyword>
<keyword id="KW-1185">Reference proteome</keyword>
<keyword id="KW-0964">Secreted</keyword>
<keyword id="KW-0732">Signal</keyword>
<keyword id="KW-0813">Transport</keyword>
<keyword id="KW-0879">Wnt signaling pathway</keyword>
<dbReference type="EMBL" id="U62892">
    <property type="protein sequence ID" value="AAC47284.1"/>
    <property type="molecule type" value="mRNA"/>
</dbReference>
<dbReference type="EMBL" id="AE014135">
    <property type="protein sequence ID" value="AAF59387.2"/>
    <property type="molecule type" value="Genomic_DNA"/>
</dbReference>
<dbReference type="EMBL" id="AF433843">
    <property type="protein sequence ID" value="AAM17994.1"/>
    <property type="molecule type" value="Genomic_DNA"/>
</dbReference>
<dbReference type="EMBL" id="AF433844">
    <property type="protein sequence ID" value="AAM17995.1"/>
    <property type="molecule type" value="Genomic_DNA"/>
</dbReference>
<dbReference type="EMBL" id="AF433845">
    <property type="protein sequence ID" value="AAM17996.1"/>
    <property type="molecule type" value="Genomic_DNA"/>
</dbReference>
<dbReference type="EMBL" id="AF433846">
    <property type="protein sequence ID" value="AAM17997.1"/>
    <property type="molecule type" value="Genomic_DNA"/>
</dbReference>
<dbReference type="EMBL" id="AF433847">
    <property type="protein sequence ID" value="AAM17998.1"/>
    <property type="molecule type" value="Genomic_DNA"/>
</dbReference>
<dbReference type="EMBL" id="AF433848">
    <property type="protein sequence ID" value="AAM17999.1"/>
    <property type="molecule type" value="Genomic_DNA"/>
</dbReference>
<dbReference type="EMBL" id="AF433849">
    <property type="protein sequence ID" value="AAM18000.1"/>
    <property type="molecule type" value="Genomic_DNA"/>
</dbReference>
<dbReference type="EMBL" id="AF433850">
    <property type="protein sequence ID" value="AAM18001.1"/>
    <property type="molecule type" value="Genomic_DNA"/>
</dbReference>
<dbReference type="EMBL" id="AF433851">
    <property type="protein sequence ID" value="AAM18002.1"/>
    <property type="molecule type" value="Genomic_DNA"/>
</dbReference>
<dbReference type="EMBL" id="AF433852">
    <property type="protein sequence ID" value="AAM18003.1"/>
    <property type="molecule type" value="Genomic_DNA"/>
</dbReference>
<dbReference type="PIR" id="T13812">
    <property type="entry name" value="T13812"/>
</dbReference>
<dbReference type="RefSeq" id="NP_001259085.1">
    <property type="nucleotide sequence ID" value="NM_001272156.1"/>
</dbReference>
<dbReference type="RefSeq" id="NP_001284720.1">
    <property type="nucleotide sequence ID" value="NM_001297791.1"/>
</dbReference>
<dbReference type="RefSeq" id="NP_001284721.1">
    <property type="nucleotide sequence ID" value="NM_001297792.1"/>
</dbReference>
<dbReference type="RefSeq" id="NP_524634.2">
    <property type="nucleotide sequence ID" value="NM_079895.3"/>
</dbReference>
<dbReference type="SMR" id="Q9V496"/>
<dbReference type="BioGRID" id="68653">
    <property type="interactions" value="55"/>
</dbReference>
<dbReference type="DIP" id="DIP-19190N"/>
<dbReference type="FunCoup" id="Q9V496">
    <property type="interactions" value="52"/>
</dbReference>
<dbReference type="IntAct" id="Q9V496">
    <property type="interactions" value="55"/>
</dbReference>
<dbReference type="STRING" id="7227.FBpp0306689"/>
<dbReference type="GlyCosmos" id="Q9V496">
    <property type="glycosylation" value="7 sites, No reported glycans"/>
</dbReference>
<dbReference type="GlyGen" id="Q9V496">
    <property type="glycosylation" value="8 sites"/>
</dbReference>
<dbReference type="iPTMnet" id="Q9V496"/>
<dbReference type="PaxDb" id="7227-FBpp0088252"/>
<dbReference type="EnsemblMetazoa" id="FBtr0089188">
    <property type="protein sequence ID" value="FBpp0088252"/>
    <property type="gene ID" value="FBgn0087002"/>
</dbReference>
<dbReference type="EnsemblMetazoa" id="FBtr0334627">
    <property type="protein sequence ID" value="FBpp0306689"/>
    <property type="gene ID" value="FBgn0087002"/>
</dbReference>
<dbReference type="EnsemblMetazoa" id="FBtr0345296">
    <property type="protein sequence ID" value="FBpp0311463"/>
    <property type="gene ID" value="FBgn0087002"/>
</dbReference>
<dbReference type="EnsemblMetazoa" id="FBtr0345297">
    <property type="protein sequence ID" value="FBpp0311464"/>
    <property type="gene ID" value="FBgn0087002"/>
</dbReference>
<dbReference type="GeneID" id="43827"/>
<dbReference type="KEGG" id="dme:Dmel_CG11064"/>
<dbReference type="AGR" id="FB:FBgn0087002"/>
<dbReference type="CTD" id="43827"/>
<dbReference type="FlyBase" id="FBgn0087002">
    <property type="gene designation" value="apolpp"/>
</dbReference>
<dbReference type="VEuPathDB" id="VectorBase:FBgn0087002"/>
<dbReference type="eggNOG" id="KOG4338">
    <property type="taxonomic scope" value="Eukaryota"/>
</dbReference>
<dbReference type="GeneTree" id="ENSGT00530000064273"/>
<dbReference type="HOGENOM" id="CLU_225812_0_0_1"/>
<dbReference type="InParanoid" id="Q9V496"/>
<dbReference type="OMA" id="MTWTILE"/>
<dbReference type="OrthoDB" id="6484170at2759"/>
<dbReference type="PhylomeDB" id="Q9V496"/>
<dbReference type="SignaLink" id="Q9V496"/>
<dbReference type="BioGRID-ORCS" id="43827">
    <property type="hits" value="0 hits in 1 CRISPR screen"/>
</dbReference>
<dbReference type="ChiTaRS" id="Rfabg">
    <property type="organism name" value="fly"/>
</dbReference>
<dbReference type="GenomeRNAi" id="43827"/>
<dbReference type="PRO" id="PR:Q9V496"/>
<dbReference type="Proteomes" id="UP000000803">
    <property type="component" value="Chromosome 4"/>
</dbReference>
<dbReference type="Bgee" id="FBgn0087002">
    <property type="expression patterns" value="Expressed in fat body cell in arthropod fat body and 223 other cell types or tissues"/>
</dbReference>
<dbReference type="ExpressionAtlas" id="Q9V496">
    <property type="expression patterns" value="baseline and differential"/>
</dbReference>
<dbReference type="GO" id="GO:0045178">
    <property type="term" value="C:basal part of cell"/>
    <property type="evidence" value="ECO:0000314"/>
    <property type="project" value="FlyBase"/>
</dbReference>
<dbReference type="GO" id="GO:0030139">
    <property type="term" value="C:endocytic vesicle"/>
    <property type="evidence" value="ECO:0000314"/>
    <property type="project" value="FlyBase"/>
</dbReference>
<dbReference type="GO" id="GO:0005576">
    <property type="term" value="C:extracellular region"/>
    <property type="evidence" value="ECO:0000303"/>
    <property type="project" value="UniProtKB"/>
</dbReference>
<dbReference type="GO" id="GO:0005615">
    <property type="term" value="C:extracellular space"/>
    <property type="evidence" value="ECO:0000314"/>
    <property type="project" value="FlyBase"/>
</dbReference>
<dbReference type="GO" id="GO:0016028">
    <property type="term" value="C:rhabdomere"/>
    <property type="evidence" value="ECO:0007669"/>
    <property type="project" value="UniProtKB-SubCell"/>
</dbReference>
<dbReference type="GO" id="GO:0005504">
    <property type="term" value="F:fatty acid binding"/>
    <property type="evidence" value="ECO:0000314"/>
    <property type="project" value="UniProtKB"/>
</dbReference>
<dbReference type="GO" id="GO:0020037">
    <property type="term" value="F:heme binding"/>
    <property type="evidence" value="ECO:0000314"/>
    <property type="project" value="FlyBase"/>
</dbReference>
<dbReference type="GO" id="GO:0005319">
    <property type="term" value="F:lipid transporter activity"/>
    <property type="evidence" value="ECO:0000314"/>
    <property type="project" value="FlyBase"/>
</dbReference>
<dbReference type="GO" id="GO:0046872">
    <property type="term" value="F:metal ion binding"/>
    <property type="evidence" value="ECO:0007669"/>
    <property type="project" value="UniProtKB-KW"/>
</dbReference>
<dbReference type="GO" id="GO:0008017">
    <property type="term" value="F:microtubule binding"/>
    <property type="evidence" value="ECO:0000314"/>
    <property type="project" value="FlyBase"/>
</dbReference>
<dbReference type="GO" id="GO:0019841">
    <property type="term" value="F:retinol binding"/>
    <property type="evidence" value="ECO:0000314"/>
    <property type="project" value="UniProtKB"/>
</dbReference>
<dbReference type="GO" id="GO:0005102">
    <property type="term" value="F:signaling receptor binding"/>
    <property type="evidence" value="ECO:0000353"/>
    <property type="project" value="FlyBase"/>
</dbReference>
<dbReference type="GO" id="GO:0006869">
    <property type="term" value="P:lipid transport"/>
    <property type="evidence" value="ECO:0000314"/>
    <property type="project" value="FlyBase"/>
</dbReference>
<dbReference type="GO" id="GO:0010877">
    <property type="term" value="P:lipid transport involved in lipid storage"/>
    <property type="evidence" value="ECO:0000315"/>
    <property type="project" value="UniProtKB"/>
</dbReference>
<dbReference type="GO" id="GO:0042953">
    <property type="term" value="P:lipoprotein transport"/>
    <property type="evidence" value="ECO:0000314"/>
    <property type="project" value="FlyBase"/>
</dbReference>
<dbReference type="GO" id="GO:0090263">
    <property type="term" value="P:positive regulation of canonical Wnt signaling pathway"/>
    <property type="evidence" value="ECO:0000315"/>
    <property type="project" value="UniProtKB"/>
</dbReference>
<dbReference type="GO" id="GO:0045880">
    <property type="term" value="P:positive regulation of smoothened signaling pathway"/>
    <property type="evidence" value="ECO:0000315"/>
    <property type="project" value="UniProtKB"/>
</dbReference>
<dbReference type="GO" id="GO:0016055">
    <property type="term" value="P:Wnt signaling pathway"/>
    <property type="evidence" value="ECO:0007669"/>
    <property type="project" value="UniProtKB-KW"/>
</dbReference>
<dbReference type="FunFam" id="2.20.50.20:FF:000009">
    <property type="entry name" value="Apolipophorin, isoform B"/>
    <property type="match status" value="1"/>
</dbReference>
<dbReference type="FunFam" id="2.20.80.10:FF:000007">
    <property type="entry name" value="Apolipophorin, isoform B"/>
    <property type="match status" value="1"/>
</dbReference>
<dbReference type="FunFam" id="2.30.230.10:FF:000015">
    <property type="entry name" value="Apolipophorin, isoform B"/>
    <property type="match status" value="1"/>
</dbReference>
<dbReference type="FunFam" id="1.25.10.20:FF:000010">
    <property type="entry name" value="GD24418"/>
    <property type="match status" value="1"/>
</dbReference>
<dbReference type="Gene3D" id="2.30.230.10">
    <property type="entry name" value="Lipovitellin, beta-sheet shell regions, chain A"/>
    <property type="match status" value="1"/>
</dbReference>
<dbReference type="Gene3D" id="2.20.80.10">
    <property type="entry name" value="Lipovitellin-phosvitin complex, chain A, domain 4"/>
    <property type="match status" value="1"/>
</dbReference>
<dbReference type="Gene3D" id="2.20.50.20">
    <property type="entry name" value="Lipovitellin. Chain A, domain 3"/>
    <property type="match status" value="1"/>
</dbReference>
<dbReference type="Gene3D" id="1.25.10.20">
    <property type="entry name" value="Vitellinogen, superhelical"/>
    <property type="match status" value="1"/>
</dbReference>
<dbReference type="InterPro" id="IPR015819">
    <property type="entry name" value="Lipid_transp_b-sht_shell"/>
</dbReference>
<dbReference type="InterPro" id="IPR009454">
    <property type="entry name" value="Lipid_transpt_open_b-sht"/>
</dbReference>
<dbReference type="InterPro" id="IPR011030">
    <property type="entry name" value="Lipovitellin_superhlx_dom"/>
</dbReference>
<dbReference type="InterPro" id="IPR015816">
    <property type="entry name" value="Vitellinogen_b-sht_N"/>
</dbReference>
<dbReference type="InterPro" id="IPR015255">
    <property type="entry name" value="Vitellinogen_open_b-sht"/>
</dbReference>
<dbReference type="InterPro" id="IPR015817">
    <property type="entry name" value="Vitellinogen_open_b-sht_sub1"/>
</dbReference>
<dbReference type="InterPro" id="IPR050733">
    <property type="entry name" value="Vitellogenin/Apolipophorin"/>
</dbReference>
<dbReference type="InterPro" id="IPR001747">
    <property type="entry name" value="Vitellogenin_N"/>
</dbReference>
<dbReference type="InterPro" id="IPR001846">
    <property type="entry name" value="VWF_type-D"/>
</dbReference>
<dbReference type="PANTHER" id="PTHR23345:SF36">
    <property type="entry name" value="APOLIPOPHORINS"/>
    <property type="match status" value="1"/>
</dbReference>
<dbReference type="PANTHER" id="PTHR23345">
    <property type="entry name" value="VITELLOGENIN-RELATED"/>
    <property type="match status" value="1"/>
</dbReference>
<dbReference type="Pfam" id="PF06448">
    <property type="entry name" value="DUF1081"/>
    <property type="match status" value="1"/>
</dbReference>
<dbReference type="Pfam" id="PF09172">
    <property type="entry name" value="Vit_open_b-sht"/>
    <property type="match status" value="1"/>
</dbReference>
<dbReference type="Pfam" id="PF01347">
    <property type="entry name" value="Vitellogenin_N"/>
    <property type="match status" value="1"/>
</dbReference>
<dbReference type="Pfam" id="PF00094">
    <property type="entry name" value="VWD"/>
    <property type="match status" value="1"/>
</dbReference>
<dbReference type="SMART" id="SM01169">
    <property type="entry name" value="DUF1943"/>
    <property type="match status" value="1"/>
</dbReference>
<dbReference type="SMART" id="SM00638">
    <property type="entry name" value="LPD_N"/>
    <property type="match status" value="1"/>
</dbReference>
<dbReference type="SMART" id="SM00216">
    <property type="entry name" value="VWD"/>
    <property type="match status" value="1"/>
</dbReference>
<dbReference type="SUPFAM" id="SSF56968">
    <property type="entry name" value="Lipovitellin-phosvitin complex, beta-sheet shell regions"/>
    <property type="match status" value="2"/>
</dbReference>
<dbReference type="SUPFAM" id="SSF48431">
    <property type="entry name" value="Lipovitellin-phosvitin complex, superhelical domain"/>
    <property type="match status" value="1"/>
</dbReference>
<dbReference type="PROSITE" id="PS51211">
    <property type="entry name" value="VITELLOGENIN"/>
    <property type="match status" value="1"/>
</dbReference>
<dbReference type="PROSITE" id="PS51233">
    <property type="entry name" value="VWFD"/>
    <property type="match status" value="1"/>
</dbReference>
<proteinExistence type="evidence at protein level"/>
<evidence type="ECO:0000250" key="1"/>
<evidence type="ECO:0000255" key="2"/>
<evidence type="ECO:0000255" key="3">
    <source>
        <dbReference type="PROSITE-ProRule" id="PRU00557"/>
    </source>
</evidence>
<evidence type="ECO:0000255" key="4">
    <source>
        <dbReference type="PROSITE-ProRule" id="PRU00580"/>
    </source>
</evidence>
<evidence type="ECO:0000269" key="5">
    <source>
    </source>
</evidence>
<evidence type="ECO:0000269" key="6">
    <source>
    </source>
</evidence>
<evidence type="ECO:0000269" key="7">
    <source>
    </source>
</evidence>
<evidence type="ECO:0000269" key="8">
    <source>
    </source>
</evidence>
<evidence type="ECO:0000269" key="9">
    <source>
    </source>
</evidence>
<evidence type="ECO:0000269" key="10">
    <source>
    </source>
</evidence>
<evidence type="ECO:0000269" key="11">
    <source>
    </source>
</evidence>
<evidence type="ECO:0000303" key="12">
    <source>
    </source>
</evidence>
<evidence type="ECO:0000303" key="13">
    <source>
    </source>
</evidence>
<evidence type="ECO:0000303" key="14">
    <source>
    </source>
</evidence>
<evidence type="ECO:0000305" key="15"/>
<evidence type="ECO:0000312" key="16">
    <source>
        <dbReference type="FlyBase" id="FBgn0087002"/>
    </source>
</evidence>
<reference key="1">
    <citation type="journal article" date="1996" name="J. Biol. Chem.">
        <title>Molecular characterization and developmental expression of a retinoid- and fatty acid-binding glycoprotein from Drosophila: a putative lipophorin.</title>
        <authorList>
            <person name="Kutty R.K."/>
            <person name="Kutty G."/>
            <person name="Kambadur R."/>
            <person name="Duncan T."/>
            <person name="Koonin E.V."/>
            <person name="Rodriguez I.R."/>
            <person name="Odenwald W.F."/>
            <person name="Wiggert B."/>
        </authorList>
    </citation>
    <scope>NUCLEOTIDE SEQUENCE [MRNA]</scope>
    <scope>PROTEIN SEQUENCE OF 26-75; 211-225; 534-568; 606-615; 1788-1803; 2085-2095; 2105-2121; 2161-2171; 2344-2361; 2402-2423; 2827-2831; 2843-2856 AND 2914-2936</scope>
    <scope>FUNCTION</scope>
    <scope>LIPID-BINDING</scope>
    <scope>TISSUE SPECIFICITY</scope>
    <source>
        <strain>Canton-S</strain>
    </source>
</reference>
<reference key="2">
    <citation type="journal article" date="2000" name="Science">
        <title>The genome sequence of Drosophila melanogaster.</title>
        <authorList>
            <person name="Adams M.D."/>
            <person name="Celniker S.E."/>
            <person name="Holt R.A."/>
            <person name="Evans C.A."/>
            <person name="Gocayne J.D."/>
            <person name="Amanatides P.G."/>
            <person name="Scherer S.E."/>
            <person name="Li P.W."/>
            <person name="Hoskins R.A."/>
            <person name="Galle R.F."/>
            <person name="George R.A."/>
            <person name="Lewis S.E."/>
            <person name="Richards S."/>
            <person name="Ashburner M."/>
            <person name="Henderson S.N."/>
            <person name="Sutton G.G."/>
            <person name="Wortman J.R."/>
            <person name="Yandell M.D."/>
            <person name="Zhang Q."/>
            <person name="Chen L.X."/>
            <person name="Brandon R.C."/>
            <person name="Rogers Y.-H.C."/>
            <person name="Blazej R.G."/>
            <person name="Champe M."/>
            <person name="Pfeiffer B.D."/>
            <person name="Wan K.H."/>
            <person name="Doyle C."/>
            <person name="Baxter E.G."/>
            <person name="Helt G."/>
            <person name="Nelson C.R."/>
            <person name="Miklos G.L.G."/>
            <person name="Abril J.F."/>
            <person name="Agbayani A."/>
            <person name="An H.-J."/>
            <person name="Andrews-Pfannkoch C."/>
            <person name="Baldwin D."/>
            <person name="Ballew R.M."/>
            <person name="Basu A."/>
            <person name="Baxendale J."/>
            <person name="Bayraktaroglu L."/>
            <person name="Beasley E.M."/>
            <person name="Beeson K.Y."/>
            <person name="Benos P.V."/>
            <person name="Berman B.P."/>
            <person name="Bhandari D."/>
            <person name="Bolshakov S."/>
            <person name="Borkova D."/>
            <person name="Botchan M.R."/>
            <person name="Bouck J."/>
            <person name="Brokstein P."/>
            <person name="Brottier P."/>
            <person name="Burtis K.C."/>
            <person name="Busam D.A."/>
            <person name="Butler H."/>
            <person name="Cadieu E."/>
            <person name="Center A."/>
            <person name="Chandra I."/>
            <person name="Cherry J.M."/>
            <person name="Cawley S."/>
            <person name="Dahlke C."/>
            <person name="Davenport L.B."/>
            <person name="Davies P."/>
            <person name="de Pablos B."/>
            <person name="Delcher A."/>
            <person name="Deng Z."/>
            <person name="Mays A.D."/>
            <person name="Dew I."/>
            <person name="Dietz S.M."/>
            <person name="Dodson K."/>
            <person name="Doup L.E."/>
            <person name="Downes M."/>
            <person name="Dugan-Rocha S."/>
            <person name="Dunkov B.C."/>
            <person name="Dunn P."/>
            <person name="Durbin K.J."/>
            <person name="Evangelista C.C."/>
            <person name="Ferraz C."/>
            <person name="Ferriera S."/>
            <person name="Fleischmann W."/>
            <person name="Fosler C."/>
            <person name="Gabrielian A.E."/>
            <person name="Garg N.S."/>
            <person name="Gelbart W.M."/>
            <person name="Glasser K."/>
            <person name="Glodek A."/>
            <person name="Gong F."/>
            <person name="Gorrell J.H."/>
            <person name="Gu Z."/>
            <person name="Guan P."/>
            <person name="Harris M."/>
            <person name="Harris N.L."/>
            <person name="Harvey D.A."/>
            <person name="Heiman T.J."/>
            <person name="Hernandez J.R."/>
            <person name="Houck J."/>
            <person name="Hostin D."/>
            <person name="Houston K.A."/>
            <person name="Howland T.J."/>
            <person name="Wei M.-H."/>
            <person name="Ibegwam C."/>
            <person name="Jalali M."/>
            <person name="Kalush F."/>
            <person name="Karpen G.H."/>
            <person name="Ke Z."/>
            <person name="Kennison J.A."/>
            <person name="Ketchum K.A."/>
            <person name="Kimmel B.E."/>
            <person name="Kodira C.D."/>
            <person name="Kraft C.L."/>
            <person name="Kravitz S."/>
            <person name="Kulp D."/>
            <person name="Lai Z."/>
            <person name="Lasko P."/>
            <person name="Lei Y."/>
            <person name="Levitsky A.A."/>
            <person name="Li J.H."/>
            <person name="Li Z."/>
            <person name="Liang Y."/>
            <person name="Lin X."/>
            <person name="Liu X."/>
            <person name="Mattei B."/>
            <person name="McIntosh T.C."/>
            <person name="McLeod M.P."/>
            <person name="McPherson D."/>
            <person name="Merkulov G."/>
            <person name="Milshina N.V."/>
            <person name="Mobarry C."/>
            <person name="Morris J."/>
            <person name="Moshrefi A."/>
            <person name="Mount S.M."/>
            <person name="Moy M."/>
            <person name="Murphy B."/>
            <person name="Murphy L."/>
            <person name="Muzny D.M."/>
            <person name="Nelson D.L."/>
            <person name="Nelson D.R."/>
            <person name="Nelson K.A."/>
            <person name="Nixon K."/>
            <person name="Nusskern D.R."/>
            <person name="Pacleb J.M."/>
            <person name="Palazzolo M."/>
            <person name="Pittman G.S."/>
            <person name="Pan S."/>
            <person name="Pollard J."/>
            <person name="Puri V."/>
            <person name="Reese M.G."/>
            <person name="Reinert K."/>
            <person name="Remington K."/>
            <person name="Saunders R.D.C."/>
            <person name="Scheeler F."/>
            <person name="Shen H."/>
            <person name="Shue B.C."/>
            <person name="Siden-Kiamos I."/>
            <person name="Simpson M."/>
            <person name="Skupski M.P."/>
            <person name="Smith T.J."/>
            <person name="Spier E."/>
            <person name="Spradling A.C."/>
            <person name="Stapleton M."/>
            <person name="Strong R."/>
            <person name="Sun E."/>
            <person name="Svirskas R."/>
            <person name="Tector C."/>
            <person name="Turner R."/>
            <person name="Venter E."/>
            <person name="Wang A.H."/>
            <person name="Wang X."/>
            <person name="Wang Z.-Y."/>
            <person name="Wassarman D.A."/>
            <person name="Weinstock G.M."/>
            <person name="Weissenbach J."/>
            <person name="Williams S.M."/>
            <person name="Woodage T."/>
            <person name="Worley K.C."/>
            <person name="Wu D."/>
            <person name="Yang S."/>
            <person name="Yao Q.A."/>
            <person name="Ye J."/>
            <person name="Yeh R.-F."/>
            <person name="Zaveri J.S."/>
            <person name="Zhan M."/>
            <person name="Zhang G."/>
            <person name="Zhao Q."/>
            <person name="Zheng L."/>
            <person name="Zheng X.H."/>
            <person name="Zhong F.N."/>
            <person name="Zhong W."/>
            <person name="Zhou X."/>
            <person name="Zhu S.C."/>
            <person name="Zhu X."/>
            <person name="Smith H.O."/>
            <person name="Gibbs R.A."/>
            <person name="Myers E.W."/>
            <person name="Rubin G.M."/>
            <person name="Venter J.C."/>
        </authorList>
    </citation>
    <scope>NUCLEOTIDE SEQUENCE [LARGE SCALE GENOMIC DNA]</scope>
    <source>
        <strain>Berkeley</strain>
    </source>
</reference>
<reference key="3">
    <citation type="journal article" date="2002" name="Genome Biol.">
        <title>Annotation of the Drosophila melanogaster euchromatic genome: a systematic review.</title>
        <authorList>
            <person name="Misra S."/>
            <person name="Crosby M.A."/>
            <person name="Mungall C.J."/>
            <person name="Matthews B.B."/>
            <person name="Campbell K.S."/>
            <person name="Hradecky P."/>
            <person name="Huang Y."/>
            <person name="Kaminker J.S."/>
            <person name="Millburn G.H."/>
            <person name="Prochnik S.E."/>
            <person name="Smith C.D."/>
            <person name="Tupy J.L."/>
            <person name="Whitfield E.J."/>
            <person name="Bayraktaroglu L."/>
            <person name="Berman B.P."/>
            <person name="Bettencourt B.R."/>
            <person name="Celniker S.E."/>
            <person name="de Grey A.D.N.J."/>
            <person name="Drysdale R.A."/>
            <person name="Harris N.L."/>
            <person name="Richter J."/>
            <person name="Russo S."/>
            <person name="Schroeder A.J."/>
            <person name="Shu S.Q."/>
            <person name="Stapleton M."/>
            <person name="Yamada C."/>
            <person name="Ashburner M."/>
            <person name="Gelbart W.M."/>
            <person name="Rubin G.M."/>
            <person name="Lewis S.E."/>
        </authorList>
    </citation>
    <scope>GENOME REANNOTATION</scope>
    <source>
        <strain>Berkeley</strain>
    </source>
</reference>
<reference key="4">
    <citation type="journal article" date="2002" name="Science">
        <title>Nucleotide variation along the Drosophila melanogaster fourth chromosome.</title>
        <authorList>
            <person name="Wang W."/>
            <person name="Thornton K."/>
            <person name="Berry A."/>
            <person name="Long M."/>
        </authorList>
    </citation>
    <scope>NUCLEOTIDE SEQUENCE [GENOMIC DNA] OF 1373-1716</scope>
    <scope>VARIANT TYR-1696</scope>
    <source>
        <strain>253.27</strain>
        <strain>253.30</strain>
        <strain>Closs10</strain>
        <strain>Closs19</strain>
        <strain>North7.13</strain>
        <strain>Rio</strain>
        <strain>South1.10</strain>
        <strain>Y10</strain>
        <strain>ZH56</strain>
        <strain>ZW30</strain>
    </source>
</reference>
<reference key="5">
    <citation type="journal article" date="1994" name="Arch. Biochem. Biophys.">
        <title>A glycoprotein binding retinoids and fatty acids is present in Drosophila.</title>
        <authorList>
            <person name="Duncan T."/>
            <person name="Kutty G."/>
            <person name="Chader G.J."/>
            <person name="Wiggert B."/>
        </authorList>
    </citation>
    <scope>GLYCOSYLATION</scope>
</reference>
<reference key="6">
    <citation type="journal article" date="1999" name="J. Lipid Res.">
        <title>Heme-binding by Drosophila retinoid- and fatty acid-binding glycoprotein (RFABG), a member of the proapolipophorin gene family.</title>
        <authorList>
            <person name="Duncan T."/>
            <person name="Osawa Y."/>
            <person name="Kutty R.K."/>
            <person name="Kutty G."/>
            <person name="Wiggert B."/>
        </authorList>
    </citation>
    <scope>HEME-BINDING</scope>
</reference>
<reference key="7">
    <citation type="journal article" date="2004" name="Curr. Biol.">
        <title>Isolation and characterization of hemolymph clotting factors in Drosophila melanogaster by a pullout method.</title>
        <authorList>
            <person name="Scherfer C."/>
            <person name="Karlsson C."/>
            <person name="Loseva O."/>
            <person name="Bidla G."/>
            <person name="Goto A."/>
            <person name="Havemann J."/>
            <person name="Dushay M.S."/>
            <person name="Theopold U."/>
        </authorList>
    </citation>
    <scope>IDENTIFICATION BY MASS SPECTROMETRY</scope>
</reference>
<reference key="8">
    <citation type="journal article" date="2005" name="Nature">
        <title>Lipoprotein particles are required for Hedgehog and Wingless signalling.</title>
        <authorList>
            <person name="Panakova D."/>
            <person name="Sprong H."/>
            <person name="Marois E."/>
            <person name="Thiele C."/>
            <person name="Eaton S."/>
        </authorList>
    </citation>
    <scope>FUNCTION IN WG AND HH TRANSPORT</scope>
</reference>
<reference key="9">
    <citation type="journal article" date="2007" name="Glycobiology">
        <title>Identification of N-glycosylated proteins from the central nervous system of Drosophila melanogaster.</title>
        <authorList>
            <person name="Koles K."/>
            <person name="Lim J.-M."/>
            <person name="Aoki K."/>
            <person name="Porterfield M."/>
            <person name="Tiemeyer M."/>
            <person name="Wells L."/>
            <person name="Panin V."/>
        </authorList>
    </citation>
    <scope>GLYCOSYLATION [LARGE SCALE ANALYSIS] AT ASN-2822</scope>
    <scope>IDENTIFICATION BY MASS SPECTROMETRY</scope>
    <source>
        <strain>Oregon-R</strain>
        <tissue>Head</tissue>
    </source>
</reference>
<reference key="10">
    <citation type="journal article" date="2013" name="Neuron">
        <title>Neurexin regulates visual function via mediating retinoid transport to promote rhodopsin maturation.</title>
        <authorList>
            <person name="Tian Y."/>
            <person name="Li T."/>
            <person name="Sun M."/>
            <person name="Wan D."/>
            <person name="Li Q."/>
            <person name="Li P."/>
            <person name="Zhang Z.C."/>
            <person name="Han J."/>
            <person name="Xie W."/>
        </authorList>
    </citation>
    <scope>INTERACTION WITH NRX-1</scope>
    <scope>SUBCELLULAR LOCATION</scope>
    <scope>TISSUE SPECIFICITY</scope>
</reference>
<reference key="11">
    <citation type="journal article" date="2021" name="PLoS Biol.">
        <title>Receptor-mediated yolk uptake is required for oskar mRNA localization and cortical anchorage of germ plasm components in the Drosophila oocyte.</title>
        <authorList>
            <person name="Tanaka T."/>
            <person name="Tani N."/>
            <person name="Nakamura A."/>
        </authorList>
    </citation>
    <scope>FUNCTION</scope>
    <scope>DISRUPTION PHENOTYPE</scope>
</reference>
<protein>
    <recommendedName>
        <fullName evidence="12">Apolipophorins</fullName>
    </recommendedName>
    <alternativeName>
        <fullName evidence="14">Retinoid- and fatty acid-binding glycoprotein</fullName>
    </alternativeName>
    <component>
        <recommendedName>
            <fullName>Apolipophorin-2</fullName>
        </recommendedName>
        <alternativeName>
            <fullName>ApoL2</fullName>
        </alternativeName>
        <alternativeName>
            <fullName evidence="13">Apolipophorin II</fullName>
            <shortName evidence="13">ApoLII</shortName>
        </alternativeName>
    </component>
    <component>
        <recommendedName>
            <fullName>Apolipophorin-1</fullName>
        </recommendedName>
        <alternativeName>
            <fullName>ApoL1</fullName>
        </alternativeName>
        <alternativeName>
            <fullName evidence="13">Apolipophorin I</fullName>
            <shortName evidence="13">ApoLI</shortName>
        </alternativeName>
    </component>
</protein>
<accession>Q9V496</accession>
<accession>Q8ST55</accession>
<accession>Q8T6S6</accession>
<accession>Q94907</accession>